<evidence type="ECO:0000255" key="1">
    <source>
        <dbReference type="HAMAP-Rule" id="MF_00484"/>
    </source>
</evidence>
<feature type="chain" id="PRO_1000014348" description="Glycogen synthase">
    <location>
        <begin position="1"/>
        <end position="479"/>
    </location>
</feature>
<feature type="binding site" evidence="1">
    <location>
        <position position="15"/>
    </location>
    <ligand>
        <name>ADP-alpha-D-glucose</name>
        <dbReference type="ChEBI" id="CHEBI:57498"/>
    </ligand>
</feature>
<organism>
    <name type="scientific">Clostridium novyi (strain NT)</name>
    <dbReference type="NCBI Taxonomy" id="386415"/>
    <lineage>
        <taxon>Bacteria</taxon>
        <taxon>Bacillati</taxon>
        <taxon>Bacillota</taxon>
        <taxon>Clostridia</taxon>
        <taxon>Eubacteriales</taxon>
        <taxon>Clostridiaceae</taxon>
        <taxon>Clostridium</taxon>
    </lineage>
</organism>
<accession>A0PY73</accession>
<proteinExistence type="inferred from homology"/>
<reference key="1">
    <citation type="journal article" date="2006" name="Nat. Biotechnol.">
        <title>The genome and transcriptomes of the anti-tumor agent Clostridium novyi-NT.</title>
        <authorList>
            <person name="Bettegowda C."/>
            <person name="Huang X."/>
            <person name="Lin J."/>
            <person name="Cheong I."/>
            <person name="Kohli M."/>
            <person name="Szabo S.A."/>
            <person name="Zhang X."/>
            <person name="Diaz L.A. Jr."/>
            <person name="Velculescu V.E."/>
            <person name="Parmigiani G."/>
            <person name="Kinzler K.W."/>
            <person name="Vogelstein B."/>
            <person name="Zhou S."/>
        </authorList>
    </citation>
    <scope>NUCLEOTIDE SEQUENCE [LARGE SCALE GENOMIC DNA]</scope>
    <source>
        <strain>NT</strain>
    </source>
</reference>
<gene>
    <name evidence="1" type="primary">glgA</name>
    <name type="ordered locus">NT01CX_1242</name>
</gene>
<comment type="function">
    <text evidence="1">Synthesizes alpha-1,4-glucan chains using ADP-glucose.</text>
</comment>
<comment type="catalytic activity">
    <reaction evidence="1">
        <text>[(1-&gt;4)-alpha-D-glucosyl](n) + ADP-alpha-D-glucose = [(1-&gt;4)-alpha-D-glucosyl](n+1) + ADP + H(+)</text>
        <dbReference type="Rhea" id="RHEA:18189"/>
        <dbReference type="Rhea" id="RHEA-COMP:9584"/>
        <dbReference type="Rhea" id="RHEA-COMP:9587"/>
        <dbReference type="ChEBI" id="CHEBI:15378"/>
        <dbReference type="ChEBI" id="CHEBI:15444"/>
        <dbReference type="ChEBI" id="CHEBI:57498"/>
        <dbReference type="ChEBI" id="CHEBI:456216"/>
        <dbReference type="EC" id="2.4.1.21"/>
    </reaction>
</comment>
<comment type="pathway">
    <text evidence="1">Glycan biosynthesis; glycogen biosynthesis.</text>
</comment>
<comment type="similarity">
    <text evidence="1">Belongs to the glycosyltransferase 1 family. Bacterial/plant glycogen synthase subfamily.</text>
</comment>
<protein>
    <recommendedName>
        <fullName evidence="1">Glycogen synthase</fullName>
        <ecNumber evidence="1">2.4.1.21</ecNumber>
    </recommendedName>
    <alternativeName>
        <fullName evidence="1">Starch [bacterial glycogen] synthase</fullName>
    </alternativeName>
</protein>
<name>GLGA_CLONN</name>
<keyword id="KW-0320">Glycogen biosynthesis</keyword>
<keyword id="KW-0328">Glycosyltransferase</keyword>
<keyword id="KW-1185">Reference proteome</keyword>
<keyword id="KW-0808">Transferase</keyword>
<dbReference type="EC" id="2.4.1.21" evidence="1"/>
<dbReference type="EMBL" id="CP000382">
    <property type="protein sequence ID" value="ABK61836.1"/>
    <property type="molecule type" value="Genomic_DNA"/>
</dbReference>
<dbReference type="RefSeq" id="WP_011721333.1">
    <property type="nucleotide sequence ID" value="NC_008593.1"/>
</dbReference>
<dbReference type="SMR" id="A0PY73"/>
<dbReference type="STRING" id="386415.NT01CX_1242"/>
<dbReference type="CAZy" id="GT5">
    <property type="family name" value="Glycosyltransferase Family 5"/>
</dbReference>
<dbReference type="KEGG" id="cno:NT01CX_1242"/>
<dbReference type="eggNOG" id="COG0297">
    <property type="taxonomic scope" value="Bacteria"/>
</dbReference>
<dbReference type="HOGENOM" id="CLU_009583_18_2_9"/>
<dbReference type="UniPathway" id="UPA00164"/>
<dbReference type="Proteomes" id="UP000008220">
    <property type="component" value="Chromosome"/>
</dbReference>
<dbReference type="GO" id="GO:0009011">
    <property type="term" value="F:alpha-1,4-glucan glucosyltransferase (ADP-glucose donor) activity"/>
    <property type="evidence" value="ECO:0007669"/>
    <property type="project" value="UniProtKB-UniRule"/>
</dbReference>
<dbReference type="GO" id="GO:0004373">
    <property type="term" value="F:alpha-1,4-glucan glucosyltransferase (UDP-glucose donor) activity"/>
    <property type="evidence" value="ECO:0007669"/>
    <property type="project" value="InterPro"/>
</dbReference>
<dbReference type="GO" id="GO:0005978">
    <property type="term" value="P:glycogen biosynthetic process"/>
    <property type="evidence" value="ECO:0007669"/>
    <property type="project" value="UniProtKB-UniRule"/>
</dbReference>
<dbReference type="CDD" id="cd03791">
    <property type="entry name" value="GT5_Glycogen_synthase_DULL1-like"/>
    <property type="match status" value="1"/>
</dbReference>
<dbReference type="Gene3D" id="3.40.50.2000">
    <property type="entry name" value="Glycogen Phosphorylase B"/>
    <property type="match status" value="2"/>
</dbReference>
<dbReference type="HAMAP" id="MF_00484">
    <property type="entry name" value="Glycogen_synth"/>
    <property type="match status" value="1"/>
</dbReference>
<dbReference type="InterPro" id="IPR001296">
    <property type="entry name" value="Glyco_trans_1"/>
</dbReference>
<dbReference type="InterPro" id="IPR011835">
    <property type="entry name" value="GS/SS"/>
</dbReference>
<dbReference type="InterPro" id="IPR013534">
    <property type="entry name" value="Starch_synth_cat_dom"/>
</dbReference>
<dbReference type="NCBIfam" id="TIGR02095">
    <property type="entry name" value="glgA"/>
    <property type="match status" value="1"/>
</dbReference>
<dbReference type="NCBIfam" id="NF001898">
    <property type="entry name" value="PRK00654.1-1"/>
    <property type="match status" value="1"/>
</dbReference>
<dbReference type="NCBIfam" id="NF001899">
    <property type="entry name" value="PRK00654.1-2"/>
    <property type="match status" value="1"/>
</dbReference>
<dbReference type="PANTHER" id="PTHR45825:SF11">
    <property type="entry name" value="ALPHA AMYLASE DOMAIN-CONTAINING PROTEIN"/>
    <property type="match status" value="1"/>
</dbReference>
<dbReference type="PANTHER" id="PTHR45825">
    <property type="entry name" value="GRANULE-BOUND STARCH SYNTHASE 1, CHLOROPLASTIC/AMYLOPLASTIC"/>
    <property type="match status" value="1"/>
</dbReference>
<dbReference type="Pfam" id="PF08323">
    <property type="entry name" value="Glyco_transf_5"/>
    <property type="match status" value="1"/>
</dbReference>
<dbReference type="Pfam" id="PF00534">
    <property type="entry name" value="Glycos_transf_1"/>
    <property type="match status" value="1"/>
</dbReference>
<dbReference type="SUPFAM" id="SSF53756">
    <property type="entry name" value="UDP-Glycosyltransferase/glycogen phosphorylase"/>
    <property type="match status" value="1"/>
</dbReference>
<sequence>MNILFATSEAFPFIKTGGLGDVSYALPKALKRKGTDIRVILPKYSSIPQEYADNMRKVAEFTVGVGWRSQYCGLLELEKDGVKFYFIDNEYYFKRNSAYAQMDDGERFSFFSRAILESINHISDFTPDVLHCNDWHTAMTIPMLRDQYFNNPKLNNIKTVYTIHNLKYQGRFGKEILWELLGFGDEYFSEDKFKYYDSISFMKAGIVYADAITTVSPTYAEEIKTEYYGEGLNGLLQSRSKDLYGILNGIDTDVNNPSTDMFLFDKYDVNNLEAKARNKEKLQEMLHLPKNRDIPMIGIVARLEEQKGFELIKEVIEELLQENIQLVVLGTGDQRYEDMFKFFAWKYPDKLSANIYFDGGLAQKIYAASDMFLMPSRFEPCGIGQLIALRYGSVPIVRETGGLNDTVFSYNEFTGEGNGFSFTSFNARDMLYTIKRAIGFYYDKDVWSKLVQRGMNGDYSWEKAAEKYMRVYSNILHKW</sequence>